<proteinExistence type="inferred from homology"/>
<sequence>MSGTKIHPTALVEKGAQLGENVFIGPFCHIGPEAVIDDGCSLMNHVVIMGKTTLGAKSKVFSHAVLGTDPQNNKHKGGYTTLSIGKNCTIREGVTMHRGSDSSVGMTIVGDDCQFFCYAHVAHDCRVGSHVTFANNAMIAGHVTVGDYVIIGGGSAVHQFVRIGHHAFIGGVSALVGDLIPYGTAVGVQAKLAGLNIIGMKRAGLERKDIHALRHAVAMLFDHSKPFKERVNDVSSFYSTSQSVLDVVNFIKEEGKRFYCTPKFEDDRIKVNKD</sequence>
<dbReference type="EC" id="2.3.1.129" evidence="1"/>
<dbReference type="EMBL" id="BX897700">
    <property type="protein sequence ID" value="CAF26181.1"/>
    <property type="molecule type" value="Genomic_DNA"/>
</dbReference>
<dbReference type="RefSeq" id="WP_011179436.1">
    <property type="nucleotide sequence ID" value="NC_005955.1"/>
</dbReference>
<dbReference type="SMR" id="Q6G1J6"/>
<dbReference type="KEGG" id="bqu:BQ06920"/>
<dbReference type="eggNOG" id="COG1043">
    <property type="taxonomic scope" value="Bacteria"/>
</dbReference>
<dbReference type="HOGENOM" id="CLU_061249_0_0_5"/>
<dbReference type="OrthoDB" id="9807278at2"/>
<dbReference type="UniPathway" id="UPA00359">
    <property type="reaction ID" value="UER00477"/>
</dbReference>
<dbReference type="Proteomes" id="UP000000597">
    <property type="component" value="Chromosome"/>
</dbReference>
<dbReference type="GO" id="GO:0005737">
    <property type="term" value="C:cytoplasm"/>
    <property type="evidence" value="ECO:0007669"/>
    <property type="project" value="UniProtKB-SubCell"/>
</dbReference>
<dbReference type="GO" id="GO:0016020">
    <property type="term" value="C:membrane"/>
    <property type="evidence" value="ECO:0007669"/>
    <property type="project" value="GOC"/>
</dbReference>
<dbReference type="GO" id="GO:0008780">
    <property type="term" value="F:acyl-[acyl-carrier-protein]-UDP-N-acetylglucosamine O-acyltransferase activity"/>
    <property type="evidence" value="ECO:0007669"/>
    <property type="project" value="UniProtKB-UniRule"/>
</dbReference>
<dbReference type="GO" id="GO:0009245">
    <property type="term" value="P:lipid A biosynthetic process"/>
    <property type="evidence" value="ECO:0007669"/>
    <property type="project" value="UniProtKB-UniRule"/>
</dbReference>
<dbReference type="CDD" id="cd03351">
    <property type="entry name" value="LbH_UDP-GlcNAc_AT"/>
    <property type="match status" value="1"/>
</dbReference>
<dbReference type="Gene3D" id="2.160.10.10">
    <property type="entry name" value="Hexapeptide repeat proteins"/>
    <property type="match status" value="1"/>
</dbReference>
<dbReference type="Gene3D" id="1.20.1180.10">
    <property type="entry name" value="Udp N-acetylglucosamine O-acyltransferase, C-terminal domain"/>
    <property type="match status" value="1"/>
</dbReference>
<dbReference type="HAMAP" id="MF_00387">
    <property type="entry name" value="LpxA"/>
    <property type="match status" value="1"/>
</dbReference>
<dbReference type="InterPro" id="IPR029098">
    <property type="entry name" value="Acetyltransf_C"/>
</dbReference>
<dbReference type="InterPro" id="IPR037157">
    <property type="entry name" value="Acetyltransf_C_sf"/>
</dbReference>
<dbReference type="InterPro" id="IPR001451">
    <property type="entry name" value="Hexapep"/>
</dbReference>
<dbReference type="InterPro" id="IPR010137">
    <property type="entry name" value="Lipid_A_LpxA"/>
</dbReference>
<dbReference type="InterPro" id="IPR011004">
    <property type="entry name" value="Trimer_LpxA-like_sf"/>
</dbReference>
<dbReference type="NCBIfam" id="TIGR01852">
    <property type="entry name" value="lipid_A_lpxA"/>
    <property type="match status" value="1"/>
</dbReference>
<dbReference type="NCBIfam" id="NF003657">
    <property type="entry name" value="PRK05289.1"/>
    <property type="match status" value="1"/>
</dbReference>
<dbReference type="PANTHER" id="PTHR43480">
    <property type="entry name" value="ACYL-[ACYL-CARRIER-PROTEIN]--UDP-N-ACETYLGLUCOSAMINE O-ACYLTRANSFERASE"/>
    <property type="match status" value="1"/>
</dbReference>
<dbReference type="PANTHER" id="PTHR43480:SF1">
    <property type="entry name" value="ACYL-[ACYL-CARRIER-PROTEIN]--UDP-N-ACETYLGLUCOSAMINE O-ACYLTRANSFERASE, MITOCHONDRIAL-RELATED"/>
    <property type="match status" value="1"/>
</dbReference>
<dbReference type="Pfam" id="PF13720">
    <property type="entry name" value="Acetyltransf_11"/>
    <property type="match status" value="1"/>
</dbReference>
<dbReference type="Pfam" id="PF00132">
    <property type="entry name" value="Hexapep"/>
    <property type="match status" value="2"/>
</dbReference>
<dbReference type="PIRSF" id="PIRSF000456">
    <property type="entry name" value="UDP-GlcNAc_acltr"/>
    <property type="match status" value="1"/>
</dbReference>
<dbReference type="SUPFAM" id="SSF51161">
    <property type="entry name" value="Trimeric LpxA-like enzymes"/>
    <property type="match status" value="1"/>
</dbReference>
<dbReference type="PROSITE" id="PS00101">
    <property type="entry name" value="HEXAPEP_TRANSFERASES"/>
    <property type="match status" value="1"/>
</dbReference>
<evidence type="ECO:0000255" key="1">
    <source>
        <dbReference type="HAMAP-Rule" id="MF_00387"/>
    </source>
</evidence>
<organism>
    <name type="scientific">Bartonella quintana (strain Toulouse)</name>
    <name type="common">Rochalimaea quintana</name>
    <dbReference type="NCBI Taxonomy" id="283165"/>
    <lineage>
        <taxon>Bacteria</taxon>
        <taxon>Pseudomonadati</taxon>
        <taxon>Pseudomonadota</taxon>
        <taxon>Alphaproteobacteria</taxon>
        <taxon>Hyphomicrobiales</taxon>
        <taxon>Bartonellaceae</taxon>
        <taxon>Bartonella</taxon>
    </lineage>
</organism>
<protein>
    <recommendedName>
        <fullName evidence="1">Acyl-[acyl-carrier-protein]--UDP-N-acetylglucosamine O-acyltransferase</fullName>
        <shortName evidence="1">UDP-N-acetylglucosamine acyltransferase</shortName>
        <ecNumber evidence="1">2.3.1.129</ecNumber>
    </recommendedName>
</protein>
<keyword id="KW-0012">Acyltransferase</keyword>
<keyword id="KW-0963">Cytoplasm</keyword>
<keyword id="KW-0441">Lipid A biosynthesis</keyword>
<keyword id="KW-0444">Lipid biosynthesis</keyword>
<keyword id="KW-0443">Lipid metabolism</keyword>
<keyword id="KW-0677">Repeat</keyword>
<keyword id="KW-0808">Transferase</keyword>
<name>LPXA_BARQU</name>
<accession>Q6G1J6</accession>
<gene>
    <name evidence="1" type="primary">lpxA</name>
    <name type="ordered locus">BQ06920</name>
</gene>
<reference key="1">
    <citation type="journal article" date="2004" name="Proc. Natl. Acad. Sci. U.S.A.">
        <title>The louse-borne human pathogen Bartonella quintana is a genomic derivative of the zoonotic agent Bartonella henselae.</title>
        <authorList>
            <person name="Alsmark U.C.M."/>
            <person name="Frank A.C."/>
            <person name="Karlberg E.O."/>
            <person name="Legault B.-A."/>
            <person name="Ardell D.H."/>
            <person name="Canbaeck B."/>
            <person name="Eriksson A.-S."/>
            <person name="Naeslund A.K."/>
            <person name="Handley S.A."/>
            <person name="Huvet M."/>
            <person name="La Scola B."/>
            <person name="Holmberg M."/>
            <person name="Andersson S.G.E."/>
        </authorList>
    </citation>
    <scope>NUCLEOTIDE SEQUENCE [LARGE SCALE GENOMIC DNA]</scope>
    <source>
        <strain>Toulouse</strain>
    </source>
</reference>
<feature type="chain" id="PRO_0000302563" description="Acyl-[acyl-carrier-protein]--UDP-N-acetylglucosamine O-acyltransferase">
    <location>
        <begin position="1"/>
        <end position="274"/>
    </location>
</feature>
<comment type="function">
    <text evidence="1">Involved in the biosynthesis of lipid A, a phosphorylated glycolipid that anchors the lipopolysaccharide to the outer membrane of the cell.</text>
</comment>
<comment type="catalytic activity">
    <reaction evidence="1">
        <text>a (3R)-hydroxyacyl-[ACP] + UDP-N-acetyl-alpha-D-glucosamine = a UDP-3-O-[(3R)-3-hydroxyacyl]-N-acetyl-alpha-D-glucosamine + holo-[ACP]</text>
        <dbReference type="Rhea" id="RHEA:67812"/>
        <dbReference type="Rhea" id="RHEA-COMP:9685"/>
        <dbReference type="Rhea" id="RHEA-COMP:9945"/>
        <dbReference type="ChEBI" id="CHEBI:57705"/>
        <dbReference type="ChEBI" id="CHEBI:64479"/>
        <dbReference type="ChEBI" id="CHEBI:78827"/>
        <dbReference type="ChEBI" id="CHEBI:173225"/>
        <dbReference type="EC" id="2.3.1.129"/>
    </reaction>
</comment>
<comment type="pathway">
    <text evidence="1">Glycolipid biosynthesis; lipid IV(A) biosynthesis; lipid IV(A) from (3R)-3-hydroxytetradecanoyl-[acyl-carrier-protein] and UDP-N-acetyl-alpha-D-glucosamine: step 1/6.</text>
</comment>
<comment type="subunit">
    <text evidence="1">Homotrimer.</text>
</comment>
<comment type="subcellular location">
    <subcellularLocation>
        <location evidence="1">Cytoplasm</location>
    </subcellularLocation>
</comment>
<comment type="similarity">
    <text evidence="1">Belongs to the transferase hexapeptide repeat family. LpxA subfamily.</text>
</comment>